<comment type="function">
    <text evidence="1">Channel that opens in response to stretch forces in the membrane lipid bilayer. May participate in the regulation of osmotic pressure changes within the cell.</text>
</comment>
<comment type="subunit">
    <text evidence="1">Homopentamer.</text>
</comment>
<comment type="subcellular location">
    <subcellularLocation>
        <location evidence="1">Cell inner membrane</location>
        <topology evidence="1">Multi-pass membrane protein</topology>
    </subcellularLocation>
</comment>
<comment type="similarity">
    <text evidence="1">Belongs to the MscL family.</text>
</comment>
<reference key="1">
    <citation type="journal article" date="2009" name="Appl. Environ. Microbiol.">
        <title>Novel features of the polysaccharide-digesting gliding bacterium Flavobacterium johnsoniae as revealed by genome sequence analysis.</title>
        <authorList>
            <person name="McBride M.J."/>
            <person name="Xie G."/>
            <person name="Martens E.C."/>
            <person name="Lapidus A."/>
            <person name="Henrissat B."/>
            <person name="Rhodes R.G."/>
            <person name="Goltsman E."/>
            <person name="Wang W."/>
            <person name="Xu J."/>
            <person name="Hunnicutt D.W."/>
            <person name="Staroscik A.M."/>
            <person name="Hoover T.R."/>
            <person name="Cheng Y.Q."/>
            <person name="Stein J.L."/>
        </authorList>
    </citation>
    <scope>NUCLEOTIDE SEQUENCE [LARGE SCALE GENOMIC DNA]</scope>
    <source>
        <strain>ATCC 17061 / DSM 2064 / JCM 8514 / BCRC 14874 / CCUG 350202 / NBRC 14942 / NCIMB 11054 / UW101</strain>
    </source>
</reference>
<proteinExistence type="inferred from homology"/>
<protein>
    <recommendedName>
        <fullName evidence="1">Large-conductance mechanosensitive channel</fullName>
    </recommendedName>
</protein>
<evidence type="ECO:0000255" key="1">
    <source>
        <dbReference type="HAMAP-Rule" id="MF_00115"/>
    </source>
</evidence>
<organism>
    <name type="scientific">Flavobacterium johnsoniae (strain ATCC 17061 / DSM 2064 / JCM 8514 / BCRC 14874 / CCUG 350202 / NBRC 14942 / NCIMB 11054 / UW101)</name>
    <name type="common">Cytophaga johnsonae</name>
    <dbReference type="NCBI Taxonomy" id="376686"/>
    <lineage>
        <taxon>Bacteria</taxon>
        <taxon>Pseudomonadati</taxon>
        <taxon>Bacteroidota</taxon>
        <taxon>Flavobacteriia</taxon>
        <taxon>Flavobacteriales</taxon>
        <taxon>Flavobacteriaceae</taxon>
        <taxon>Flavobacterium</taxon>
    </lineage>
</organism>
<accession>A5FKC3</accession>
<sequence length="126" mass="13574">MGFFSEFKEFAMKGNVVDLAVGVIIGAAFGKIVSSFIEDVITPLLLKPALDAANLSTIEQLTAFGGVKYGLFLSAVINFIIVAFVLFLIIKAMNHAKKKDVAPPPPPAGPTQEELLTQIRDLLKNK</sequence>
<keyword id="KW-0997">Cell inner membrane</keyword>
<keyword id="KW-1003">Cell membrane</keyword>
<keyword id="KW-0407">Ion channel</keyword>
<keyword id="KW-0406">Ion transport</keyword>
<keyword id="KW-0472">Membrane</keyword>
<keyword id="KW-0812">Transmembrane</keyword>
<keyword id="KW-1133">Transmembrane helix</keyword>
<keyword id="KW-0813">Transport</keyword>
<dbReference type="EMBL" id="CP000685">
    <property type="protein sequence ID" value="ABQ04351.1"/>
    <property type="molecule type" value="Genomic_DNA"/>
</dbReference>
<dbReference type="RefSeq" id="WP_012023399.1">
    <property type="nucleotide sequence ID" value="NC_009441.1"/>
</dbReference>
<dbReference type="SMR" id="A5FKC3"/>
<dbReference type="STRING" id="376686.Fjoh_1319"/>
<dbReference type="KEGG" id="fjo:Fjoh_1319"/>
<dbReference type="eggNOG" id="COG1970">
    <property type="taxonomic scope" value="Bacteria"/>
</dbReference>
<dbReference type="HOGENOM" id="CLU_095787_3_1_10"/>
<dbReference type="OrthoDB" id="9810350at2"/>
<dbReference type="Proteomes" id="UP000006694">
    <property type="component" value="Chromosome"/>
</dbReference>
<dbReference type="GO" id="GO:0005886">
    <property type="term" value="C:plasma membrane"/>
    <property type="evidence" value="ECO:0007669"/>
    <property type="project" value="UniProtKB-SubCell"/>
</dbReference>
<dbReference type="GO" id="GO:0008381">
    <property type="term" value="F:mechanosensitive monoatomic ion channel activity"/>
    <property type="evidence" value="ECO:0007669"/>
    <property type="project" value="UniProtKB-UniRule"/>
</dbReference>
<dbReference type="Gene3D" id="1.10.1200.120">
    <property type="entry name" value="Large-conductance mechanosensitive channel, MscL, domain 1"/>
    <property type="match status" value="1"/>
</dbReference>
<dbReference type="HAMAP" id="MF_00115">
    <property type="entry name" value="MscL"/>
    <property type="match status" value="1"/>
</dbReference>
<dbReference type="InterPro" id="IPR019823">
    <property type="entry name" value="Mechanosensitive_channel_CS"/>
</dbReference>
<dbReference type="InterPro" id="IPR001185">
    <property type="entry name" value="MS_channel"/>
</dbReference>
<dbReference type="InterPro" id="IPR037673">
    <property type="entry name" value="MSC/AndL"/>
</dbReference>
<dbReference type="InterPro" id="IPR036019">
    <property type="entry name" value="MscL_channel"/>
</dbReference>
<dbReference type="NCBIfam" id="TIGR00220">
    <property type="entry name" value="mscL"/>
    <property type="match status" value="1"/>
</dbReference>
<dbReference type="PANTHER" id="PTHR30266:SF2">
    <property type="entry name" value="LARGE-CONDUCTANCE MECHANOSENSITIVE CHANNEL"/>
    <property type="match status" value="1"/>
</dbReference>
<dbReference type="PANTHER" id="PTHR30266">
    <property type="entry name" value="MECHANOSENSITIVE CHANNEL MSCL"/>
    <property type="match status" value="1"/>
</dbReference>
<dbReference type="Pfam" id="PF01741">
    <property type="entry name" value="MscL"/>
    <property type="match status" value="1"/>
</dbReference>
<dbReference type="PRINTS" id="PR01264">
    <property type="entry name" value="MECHCHANNEL"/>
</dbReference>
<dbReference type="SUPFAM" id="SSF81330">
    <property type="entry name" value="Gated mechanosensitive channel"/>
    <property type="match status" value="1"/>
</dbReference>
<dbReference type="PROSITE" id="PS01327">
    <property type="entry name" value="MSCL"/>
    <property type="match status" value="1"/>
</dbReference>
<name>MSCL_FLAJ1</name>
<feature type="chain" id="PRO_1000076041" description="Large-conductance mechanosensitive channel">
    <location>
        <begin position="1"/>
        <end position="126"/>
    </location>
</feature>
<feature type="transmembrane region" description="Helical" evidence="1">
    <location>
        <begin position="17"/>
        <end position="37"/>
    </location>
</feature>
<feature type="transmembrane region" description="Helical" evidence="1">
    <location>
        <begin position="70"/>
        <end position="90"/>
    </location>
</feature>
<gene>
    <name evidence="1" type="primary">mscL</name>
    <name type="ordered locus">Fjoh_1319</name>
</gene>